<sequence>MASASSVSLMLLVAAAMASAASAQLSATFYDTSCPNALSTIKSAVTAAVNSEPRMGASLVRLHFHDCFVQGCDASVLLSGQEQNAGPNAGSLRGFNVVDNIKTQVEAICSQTVSCADILAVAARDSVVALGGPSWTVLLGRRDSTTANESQANTDLPAPSSSLAELIGNFSRKGLDVTDMVALSGAHTIGQAQCQNFRDRLYNETNIDSSFATALKANCPRPTGSGDSNLAPLDTTTPNAFDSAYYTNLLSNKGLLHSDQVLFNGGSTDNTVRNFSSNTAAFNSAFTAAMVKMGNISPLTGTQGQIRLNCSKVN</sequence>
<gene>
    <name type="primary">PRX112</name>
    <name type="synonym">POXGX9</name>
    <name type="ordered locus">Os07g0677300</name>
    <name type="ordered locus">LOC_Os07g48030</name>
    <name type="ORF">OJ1167_G06.126</name>
    <name type="ORF">OJ1409_C08.1</name>
    <name evidence="4" type="ORF">OsJ_25570</name>
</gene>
<dbReference type="EC" id="1.11.1.7"/>
<dbReference type="EMBL" id="D16442">
    <property type="protein sequence ID" value="BAA03911.1"/>
    <property type="molecule type" value="mRNA"/>
</dbReference>
<dbReference type="EMBL" id="AP003757">
    <property type="protein sequence ID" value="BAC79528.1"/>
    <property type="molecule type" value="Genomic_DNA"/>
</dbReference>
<dbReference type="EMBL" id="AP003817">
    <property type="protein sequence ID" value="BAC83104.1"/>
    <property type="molecule type" value="Genomic_DNA"/>
</dbReference>
<dbReference type="EMBL" id="AP008213">
    <property type="protein sequence ID" value="BAF22543.1"/>
    <property type="molecule type" value="Genomic_DNA"/>
</dbReference>
<dbReference type="EMBL" id="AP014963">
    <property type="protein sequence ID" value="BAT03208.1"/>
    <property type="molecule type" value="Genomic_DNA"/>
</dbReference>
<dbReference type="EMBL" id="CM000144">
    <property type="protein sequence ID" value="EEE67816.1"/>
    <property type="molecule type" value="Genomic_DNA"/>
</dbReference>
<dbReference type="EMBL" id="AK073616">
    <property type="protein sequence ID" value="BAG93552.1"/>
    <property type="molecule type" value="mRNA"/>
</dbReference>
<dbReference type="EMBL" id="BN000641">
    <property type="protein sequence ID" value="CAH69354.1"/>
    <property type="molecule type" value="Genomic_DNA"/>
</dbReference>
<dbReference type="PIR" id="T03929">
    <property type="entry name" value="T03929"/>
</dbReference>
<dbReference type="RefSeq" id="XP_015647501.1">
    <property type="nucleotide sequence ID" value="XM_015792015.1"/>
</dbReference>
<dbReference type="SMR" id="Q0D3N0"/>
<dbReference type="FunCoup" id="Q0D3N0">
    <property type="interactions" value="162"/>
</dbReference>
<dbReference type="STRING" id="39947.Q0D3N0"/>
<dbReference type="PeroxiBase" id="1122">
    <property type="entry name" value="OsPrx112"/>
</dbReference>
<dbReference type="GlyCosmos" id="Q0D3N0">
    <property type="glycosylation" value="5 sites, No reported glycans"/>
</dbReference>
<dbReference type="PaxDb" id="39947-Q0D3N0"/>
<dbReference type="EnsemblPlants" id="Os07t0677300-01">
    <property type="protein sequence ID" value="Os07t0677300-01"/>
    <property type="gene ID" value="Os07g0677300"/>
</dbReference>
<dbReference type="Gramene" id="Os07t0677300-01">
    <property type="protein sequence ID" value="Os07t0677300-01"/>
    <property type="gene ID" value="Os07g0677300"/>
</dbReference>
<dbReference type="KEGG" id="dosa:Os07g0677300"/>
<dbReference type="eggNOG" id="ENOG502QSXF">
    <property type="taxonomic scope" value="Eukaryota"/>
</dbReference>
<dbReference type="HOGENOM" id="CLU_010543_0_0_1"/>
<dbReference type="InParanoid" id="Q0D3N0"/>
<dbReference type="OMA" id="QARCAFF"/>
<dbReference type="OrthoDB" id="2113341at2759"/>
<dbReference type="Proteomes" id="UP000000763">
    <property type="component" value="Chromosome 7"/>
</dbReference>
<dbReference type="Proteomes" id="UP000007752">
    <property type="component" value="Chromosome 7"/>
</dbReference>
<dbReference type="Proteomes" id="UP000059680">
    <property type="component" value="Chromosome 7"/>
</dbReference>
<dbReference type="GO" id="GO:0005576">
    <property type="term" value="C:extracellular region"/>
    <property type="evidence" value="ECO:0007669"/>
    <property type="project" value="UniProtKB-SubCell"/>
</dbReference>
<dbReference type="GO" id="GO:0020037">
    <property type="term" value="F:heme binding"/>
    <property type="evidence" value="ECO:0007669"/>
    <property type="project" value="InterPro"/>
</dbReference>
<dbReference type="GO" id="GO:0140825">
    <property type="term" value="F:lactoperoxidase activity"/>
    <property type="evidence" value="ECO:0007669"/>
    <property type="project" value="UniProtKB-EC"/>
</dbReference>
<dbReference type="GO" id="GO:0046872">
    <property type="term" value="F:metal ion binding"/>
    <property type="evidence" value="ECO:0007669"/>
    <property type="project" value="UniProtKB-KW"/>
</dbReference>
<dbReference type="GO" id="GO:0042744">
    <property type="term" value="P:hydrogen peroxide catabolic process"/>
    <property type="evidence" value="ECO:0007669"/>
    <property type="project" value="UniProtKB-KW"/>
</dbReference>
<dbReference type="GO" id="GO:0006979">
    <property type="term" value="P:response to oxidative stress"/>
    <property type="evidence" value="ECO:0007669"/>
    <property type="project" value="InterPro"/>
</dbReference>
<dbReference type="CDD" id="cd00693">
    <property type="entry name" value="secretory_peroxidase"/>
    <property type="match status" value="1"/>
</dbReference>
<dbReference type="FunFam" id="1.10.420.10:FF:000001">
    <property type="entry name" value="Peroxidase"/>
    <property type="match status" value="1"/>
</dbReference>
<dbReference type="FunFam" id="1.10.520.10:FF:000009">
    <property type="entry name" value="Peroxidase"/>
    <property type="match status" value="1"/>
</dbReference>
<dbReference type="Gene3D" id="1.10.520.10">
    <property type="match status" value="1"/>
</dbReference>
<dbReference type="Gene3D" id="1.10.420.10">
    <property type="entry name" value="Peroxidase, domain 2"/>
    <property type="match status" value="1"/>
</dbReference>
<dbReference type="InterPro" id="IPR002016">
    <property type="entry name" value="Haem_peroxidase"/>
</dbReference>
<dbReference type="InterPro" id="IPR010255">
    <property type="entry name" value="Haem_peroxidase_sf"/>
</dbReference>
<dbReference type="InterPro" id="IPR000823">
    <property type="entry name" value="Peroxidase_pln"/>
</dbReference>
<dbReference type="InterPro" id="IPR019794">
    <property type="entry name" value="Peroxidases_AS"/>
</dbReference>
<dbReference type="InterPro" id="IPR019793">
    <property type="entry name" value="Peroxidases_heam-ligand_BS"/>
</dbReference>
<dbReference type="InterPro" id="IPR033905">
    <property type="entry name" value="Secretory_peroxidase"/>
</dbReference>
<dbReference type="PANTHER" id="PTHR31388:SF13">
    <property type="entry name" value="PEROXIDASE 2"/>
    <property type="match status" value="1"/>
</dbReference>
<dbReference type="PANTHER" id="PTHR31388">
    <property type="entry name" value="PEROXIDASE 72-RELATED"/>
    <property type="match status" value="1"/>
</dbReference>
<dbReference type="Pfam" id="PF00141">
    <property type="entry name" value="peroxidase"/>
    <property type="match status" value="1"/>
</dbReference>
<dbReference type="PRINTS" id="PR00458">
    <property type="entry name" value="PEROXIDASE"/>
</dbReference>
<dbReference type="PRINTS" id="PR00461">
    <property type="entry name" value="PLPEROXIDASE"/>
</dbReference>
<dbReference type="SUPFAM" id="SSF48113">
    <property type="entry name" value="Heme-dependent peroxidases"/>
    <property type="match status" value="1"/>
</dbReference>
<dbReference type="PROSITE" id="PS00435">
    <property type="entry name" value="PEROXIDASE_1"/>
    <property type="match status" value="1"/>
</dbReference>
<dbReference type="PROSITE" id="PS00436">
    <property type="entry name" value="PEROXIDASE_2"/>
    <property type="match status" value="1"/>
</dbReference>
<dbReference type="PROSITE" id="PS50873">
    <property type="entry name" value="PEROXIDASE_4"/>
    <property type="match status" value="1"/>
</dbReference>
<feature type="signal peptide" evidence="1">
    <location>
        <begin position="1"/>
        <end position="23"/>
    </location>
</feature>
<feature type="chain" id="PRO_0000023754" description="Peroxidase 2">
    <location>
        <begin position="24"/>
        <end position="314"/>
    </location>
</feature>
<feature type="active site" description="Proton acceptor" evidence="2 3">
    <location>
        <position position="65"/>
    </location>
</feature>
<feature type="binding site" evidence="2">
    <location>
        <position position="66"/>
    </location>
    <ligand>
        <name>Ca(2+)</name>
        <dbReference type="ChEBI" id="CHEBI:29108"/>
        <label>1</label>
    </ligand>
</feature>
<feature type="binding site" evidence="2">
    <location>
        <position position="69"/>
    </location>
    <ligand>
        <name>Ca(2+)</name>
        <dbReference type="ChEBI" id="CHEBI:29108"/>
        <label>1</label>
    </ligand>
</feature>
<feature type="binding site" evidence="2">
    <location>
        <position position="71"/>
    </location>
    <ligand>
        <name>Ca(2+)</name>
        <dbReference type="ChEBI" id="CHEBI:29108"/>
        <label>1</label>
    </ligand>
</feature>
<feature type="binding site" evidence="2">
    <location>
        <position position="73"/>
    </location>
    <ligand>
        <name>Ca(2+)</name>
        <dbReference type="ChEBI" id="CHEBI:29108"/>
        <label>1</label>
    </ligand>
</feature>
<feature type="binding site" evidence="2">
    <location>
        <position position="75"/>
    </location>
    <ligand>
        <name>Ca(2+)</name>
        <dbReference type="ChEBI" id="CHEBI:29108"/>
        <label>1</label>
    </ligand>
</feature>
<feature type="binding site" evidence="2">
    <location>
        <position position="157"/>
    </location>
    <ligand>
        <name>substrate</name>
    </ligand>
</feature>
<feature type="binding site" description="axial binding residue" evidence="2">
    <location>
        <position position="187"/>
    </location>
    <ligand>
        <name>heme b</name>
        <dbReference type="ChEBI" id="CHEBI:60344"/>
    </ligand>
    <ligandPart>
        <name>Fe</name>
        <dbReference type="ChEBI" id="CHEBI:18248"/>
    </ligandPart>
</feature>
<feature type="binding site" evidence="2">
    <location>
        <position position="188"/>
    </location>
    <ligand>
        <name>Ca(2+)</name>
        <dbReference type="ChEBI" id="CHEBI:29108"/>
        <label>2</label>
    </ligand>
</feature>
<feature type="binding site" evidence="2">
    <location>
        <position position="234"/>
    </location>
    <ligand>
        <name>Ca(2+)</name>
        <dbReference type="ChEBI" id="CHEBI:29108"/>
        <label>2</label>
    </ligand>
</feature>
<feature type="binding site" evidence="2">
    <location>
        <position position="237"/>
    </location>
    <ligand>
        <name>Ca(2+)</name>
        <dbReference type="ChEBI" id="CHEBI:29108"/>
        <label>2</label>
    </ligand>
</feature>
<feature type="binding site" evidence="2">
    <location>
        <position position="242"/>
    </location>
    <ligand>
        <name>Ca(2+)</name>
        <dbReference type="ChEBI" id="CHEBI:29108"/>
        <label>2</label>
    </ligand>
</feature>
<feature type="site" description="Transition state stabilizer" evidence="2">
    <location>
        <position position="61"/>
    </location>
</feature>
<feature type="modified residue" description="Pyrrolidone carboxylic acid" evidence="2">
    <location>
        <position position="24"/>
    </location>
</feature>
<feature type="glycosylation site" description="N-linked (GlcNAc...) asparagine" evidence="1">
    <location>
        <position position="148"/>
    </location>
</feature>
<feature type="glycosylation site" description="N-linked (GlcNAc...) asparagine" evidence="1">
    <location>
        <position position="169"/>
    </location>
</feature>
<feature type="glycosylation site" description="N-linked (GlcNAc...) asparagine" evidence="1">
    <location>
        <position position="203"/>
    </location>
</feature>
<feature type="glycosylation site" description="N-linked (GlcNAc...) asparagine" evidence="1">
    <location>
        <position position="274"/>
    </location>
</feature>
<feature type="glycosylation site" description="N-linked (GlcNAc...) asparagine" evidence="1">
    <location>
        <position position="309"/>
    </location>
</feature>
<feature type="disulfide bond" evidence="2">
    <location>
        <begin position="34"/>
        <end position="109"/>
    </location>
</feature>
<feature type="disulfide bond" evidence="2">
    <location>
        <begin position="67"/>
        <end position="72"/>
    </location>
</feature>
<feature type="disulfide bond" evidence="2">
    <location>
        <begin position="115"/>
        <end position="310"/>
    </location>
</feature>
<feature type="disulfide bond" evidence="2">
    <location>
        <begin position="194"/>
        <end position="219"/>
    </location>
</feature>
<protein>
    <recommendedName>
        <fullName>Peroxidase 2</fullName>
        <ecNumber>1.11.1.7</ecNumber>
    </recommendedName>
</protein>
<proteinExistence type="evidence at transcript level"/>
<accession>Q0D3N0</accession>
<accession>B7EMF5</accession>
<accession>O22441</accession>
<accession>P37835</accession>
<accession>Q7F1U3</accession>
<reference key="1">
    <citation type="submission" date="1993-06" db="EMBL/GenBank/DDBJ databases">
        <title>Peroxidase from rice cDNA.</title>
        <authorList>
            <person name="Hori M."/>
            <person name="Sasaki T."/>
            <person name="Minobe Y."/>
        </authorList>
    </citation>
    <scope>NUCLEOTIDE SEQUENCE [MRNA]</scope>
    <source>
        <strain>cv. Nipponbare</strain>
        <tissue>Root</tissue>
    </source>
</reference>
<reference key="2">
    <citation type="journal article" date="2005" name="Nature">
        <title>The map-based sequence of the rice genome.</title>
        <authorList>
            <consortium name="International rice genome sequencing project (IRGSP)"/>
        </authorList>
    </citation>
    <scope>NUCLEOTIDE SEQUENCE [LARGE SCALE GENOMIC DNA]</scope>
    <source>
        <strain>cv. Nipponbare</strain>
    </source>
</reference>
<reference key="3">
    <citation type="journal article" date="2008" name="Nucleic Acids Res.">
        <title>The rice annotation project database (RAP-DB): 2008 update.</title>
        <authorList>
            <consortium name="The rice annotation project (RAP)"/>
        </authorList>
    </citation>
    <scope>GENOME REANNOTATION</scope>
    <source>
        <strain>cv. Nipponbare</strain>
    </source>
</reference>
<reference key="4">
    <citation type="journal article" date="2013" name="Rice">
        <title>Improvement of the Oryza sativa Nipponbare reference genome using next generation sequence and optical map data.</title>
        <authorList>
            <person name="Kawahara Y."/>
            <person name="de la Bastide M."/>
            <person name="Hamilton J.P."/>
            <person name="Kanamori H."/>
            <person name="McCombie W.R."/>
            <person name="Ouyang S."/>
            <person name="Schwartz D.C."/>
            <person name="Tanaka T."/>
            <person name="Wu J."/>
            <person name="Zhou S."/>
            <person name="Childs K.L."/>
            <person name="Davidson R.M."/>
            <person name="Lin H."/>
            <person name="Quesada-Ocampo L."/>
            <person name="Vaillancourt B."/>
            <person name="Sakai H."/>
            <person name="Lee S.S."/>
            <person name="Kim J."/>
            <person name="Numa H."/>
            <person name="Itoh T."/>
            <person name="Buell C.R."/>
            <person name="Matsumoto T."/>
        </authorList>
    </citation>
    <scope>GENOME REANNOTATION</scope>
    <source>
        <strain>cv. Nipponbare</strain>
    </source>
</reference>
<reference key="5">
    <citation type="journal article" date="2005" name="PLoS Biol.">
        <title>The genomes of Oryza sativa: a history of duplications.</title>
        <authorList>
            <person name="Yu J."/>
            <person name="Wang J."/>
            <person name="Lin W."/>
            <person name="Li S."/>
            <person name="Li H."/>
            <person name="Zhou J."/>
            <person name="Ni P."/>
            <person name="Dong W."/>
            <person name="Hu S."/>
            <person name="Zeng C."/>
            <person name="Zhang J."/>
            <person name="Zhang Y."/>
            <person name="Li R."/>
            <person name="Xu Z."/>
            <person name="Li S."/>
            <person name="Li X."/>
            <person name="Zheng H."/>
            <person name="Cong L."/>
            <person name="Lin L."/>
            <person name="Yin J."/>
            <person name="Geng J."/>
            <person name="Li G."/>
            <person name="Shi J."/>
            <person name="Liu J."/>
            <person name="Lv H."/>
            <person name="Li J."/>
            <person name="Wang J."/>
            <person name="Deng Y."/>
            <person name="Ran L."/>
            <person name="Shi X."/>
            <person name="Wang X."/>
            <person name="Wu Q."/>
            <person name="Li C."/>
            <person name="Ren X."/>
            <person name="Wang J."/>
            <person name="Wang X."/>
            <person name="Li D."/>
            <person name="Liu D."/>
            <person name="Zhang X."/>
            <person name="Ji Z."/>
            <person name="Zhao W."/>
            <person name="Sun Y."/>
            <person name="Zhang Z."/>
            <person name="Bao J."/>
            <person name="Han Y."/>
            <person name="Dong L."/>
            <person name="Ji J."/>
            <person name="Chen P."/>
            <person name="Wu S."/>
            <person name="Liu J."/>
            <person name="Xiao Y."/>
            <person name="Bu D."/>
            <person name="Tan J."/>
            <person name="Yang L."/>
            <person name="Ye C."/>
            <person name="Zhang J."/>
            <person name="Xu J."/>
            <person name="Zhou Y."/>
            <person name="Yu Y."/>
            <person name="Zhang B."/>
            <person name="Zhuang S."/>
            <person name="Wei H."/>
            <person name="Liu B."/>
            <person name="Lei M."/>
            <person name="Yu H."/>
            <person name="Li Y."/>
            <person name="Xu H."/>
            <person name="Wei S."/>
            <person name="He X."/>
            <person name="Fang L."/>
            <person name="Zhang Z."/>
            <person name="Zhang Y."/>
            <person name="Huang X."/>
            <person name="Su Z."/>
            <person name="Tong W."/>
            <person name="Li J."/>
            <person name="Tong Z."/>
            <person name="Li S."/>
            <person name="Ye J."/>
            <person name="Wang L."/>
            <person name="Fang L."/>
            <person name="Lei T."/>
            <person name="Chen C.-S."/>
            <person name="Chen H.-C."/>
            <person name="Xu Z."/>
            <person name="Li H."/>
            <person name="Huang H."/>
            <person name="Zhang F."/>
            <person name="Xu H."/>
            <person name="Li N."/>
            <person name="Zhao C."/>
            <person name="Li S."/>
            <person name="Dong L."/>
            <person name="Huang Y."/>
            <person name="Li L."/>
            <person name="Xi Y."/>
            <person name="Qi Q."/>
            <person name="Li W."/>
            <person name="Zhang B."/>
            <person name="Hu W."/>
            <person name="Zhang Y."/>
            <person name="Tian X."/>
            <person name="Jiao Y."/>
            <person name="Liang X."/>
            <person name="Jin J."/>
            <person name="Gao L."/>
            <person name="Zheng W."/>
            <person name="Hao B."/>
            <person name="Liu S.-M."/>
            <person name="Wang W."/>
            <person name="Yuan L."/>
            <person name="Cao M."/>
            <person name="McDermott J."/>
            <person name="Samudrala R."/>
            <person name="Wang J."/>
            <person name="Wong G.K.-S."/>
            <person name="Yang H."/>
        </authorList>
    </citation>
    <scope>NUCLEOTIDE SEQUENCE [LARGE SCALE GENOMIC DNA]</scope>
    <source>
        <strain>cv. Nipponbare</strain>
    </source>
</reference>
<reference key="6">
    <citation type="journal article" date="2003" name="Science">
        <title>Collection, mapping, and annotation of over 28,000 cDNA clones from japonica rice.</title>
        <authorList>
            <consortium name="The rice full-length cDNA consortium"/>
        </authorList>
    </citation>
    <scope>NUCLEOTIDE SEQUENCE [LARGE SCALE MRNA]</scope>
    <source>
        <strain>cv. Nipponbare</strain>
    </source>
</reference>
<reference key="7">
    <citation type="journal article" date="2004" name="Phytochemistry">
        <title>The class III peroxidase multigenic family in rice and its evolution in land plants.</title>
        <authorList>
            <person name="Passardi F."/>
            <person name="Longet D."/>
            <person name="Penel C."/>
            <person name="Dunand C."/>
        </authorList>
    </citation>
    <scope>IDENTIFICATION</scope>
    <source>
        <strain>cv. Nipponbare</strain>
    </source>
</reference>
<comment type="function">
    <text>Removal of H(2)O(2), oxidation of toxic reductants, biosynthesis and degradation of lignin, suberization, auxin catabolism, response to environmental stresses such as wounding, pathogen attack and oxidative stress. These functions might be dependent on each isozyme/isoform in each plant tissue.</text>
</comment>
<comment type="catalytic activity">
    <reaction>
        <text>2 a phenolic donor + H2O2 = 2 a phenolic radical donor + 2 H2O</text>
        <dbReference type="Rhea" id="RHEA:56136"/>
        <dbReference type="ChEBI" id="CHEBI:15377"/>
        <dbReference type="ChEBI" id="CHEBI:16240"/>
        <dbReference type="ChEBI" id="CHEBI:139520"/>
        <dbReference type="ChEBI" id="CHEBI:139521"/>
        <dbReference type="EC" id="1.11.1.7"/>
    </reaction>
</comment>
<comment type="cofactor">
    <cofactor>
        <name>Ca(2+)</name>
        <dbReference type="ChEBI" id="CHEBI:29108"/>
    </cofactor>
    <text>Binds 2 calcium ions per subunit.</text>
</comment>
<comment type="cofactor">
    <cofactor>
        <name>heme b</name>
        <dbReference type="ChEBI" id="CHEBI:60344"/>
    </cofactor>
    <text>Binds 1 heme b (iron(II)-protoporphyrin IX) group per subunit.</text>
</comment>
<comment type="subcellular location">
    <subcellularLocation>
        <location evidence="2">Secreted</location>
    </subcellularLocation>
</comment>
<comment type="similarity">
    <text evidence="2">Belongs to the peroxidase family. Classical plant (class III) peroxidase subfamily.</text>
</comment>
<name>PER2_ORYSJ</name>
<evidence type="ECO:0000255" key="1"/>
<evidence type="ECO:0000255" key="2">
    <source>
        <dbReference type="PROSITE-ProRule" id="PRU00297"/>
    </source>
</evidence>
<evidence type="ECO:0000255" key="3">
    <source>
        <dbReference type="PROSITE-ProRule" id="PRU10012"/>
    </source>
</evidence>
<evidence type="ECO:0000312" key="4">
    <source>
        <dbReference type="EMBL" id="EEE67816.1"/>
    </source>
</evidence>
<keyword id="KW-0106">Calcium</keyword>
<keyword id="KW-1015">Disulfide bond</keyword>
<keyword id="KW-0325">Glycoprotein</keyword>
<keyword id="KW-0349">Heme</keyword>
<keyword id="KW-0376">Hydrogen peroxide</keyword>
<keyword id="KW-0408">Iron</keyword>
<keyword id="KW-0479">Metal-binding</keyword>
<keyword id="KW-0560">Oxidoreductase</keyword>
<keyword id="KW-0575">Peroxidase</keyword>
<keyword id="KW-0873">Pyrrolidone carboxylic acid</keyword>
<keyword id="KW-1185">Reference proteome</keyword>
<keyword id="KW-0964">Secreted</keyword>
<keyword id="KW-0732">Signal</keyword>
<organism>
    <name type="scientific">Oryza sativa subsp. japonica</name>
    <name type="common">Rice</name>
    <dbReference type="NCBI Taxonomy" id="39947"/>
    <lineage>
        <taxon>Eukaryota</taxon>
        <taxon>Viridiplantae</taxon>
        <taxon>Streptophyta</taxon>
        <taxon>Embryophyta</taxon>
        <taxon>Tracheophyta</taxon>
        <taxon>Spermatophyta</taxon>
        <taxon>Magnoliopsida</taxon>
        <taxon>Liliopsida</taxon>
        <taxon>Poales</taxon>
        <taxon>Poaceae</taxon>
        <taxon>BOP clade</taxon>
        <taxon>Oryzoideae</taxon>
        <taxon>Oryzeae</taxon>
        <taxon>Oryzinae</taxon>
        <taxon>Oryza</taxon>
        <taxon>Oryza sativa</taxon>
    </lineage>
</organism>